<feature type="chain" id="PRO_1000001037" description="Dihydroxy-acid dehydratase">
    <location>
        <begin position="1"/>
        <end position="613"/>
    </location>
</feature>
<feature type="active site" description="Proton acceptor" evidence="1">
    <location>
        <position position="515"/>
    </location>
</feature>
<feature type="binding site" evidence="1">
    <location>
        <position position="81"/>
    </location>
    <ligand>
        <name>Mg(2+)</name>
        <dbReference type="ChEBI" id="CHEBI:18420"/>
    </ligand>
</feature>
<feature type="binding site" evidence="1">
    <location>
        <position position="122"/>
    </location>
    <ligand>
        <name>[2Fe-2S] cluster</name>
        <dbReference type="ChEBI" id="CHEBI:190135"/>
    </ligand>
</feature>
<feature type="binding site" evidence="1">
    <location>
        <position position="123"/>
    </location>
    <ligand>
        <name>Mg(2+)</name>
        <dbReference type="ChEBI" id="CHEBI:18420"/>
    </ligand>
</feature>
<feature type="binding site" description="via carbamate group" evidence="1">
    <location>
        <position position="124"/>
    </location>
    <ligand>
        <name>Mg(2+)</name>
        <dbReference type="ChEBI" id="CHEBI:18420"/>
    </ligand>
</feature>
<feature type="binding site" evidence="1">
    <location>
        <position position="193"/>
    </location>
    <ligand>
        <name>[2Fe-2S] cluster</name>
        <dbReference type="ChEBI" id="CHEBI:190135"/>
    </ligand>
</feature>
<feature type="binding site" evidence="1">
    <location>
        <position position="489"/>
    </location>
    <ligand>
        <name>Mg(2+)</name>
        <dbReference type="ChEBI" id="CHEBI:18420"/>
    </ligand>
</feature>
<feature type="modified residue" description="N6-carboxylysine" evidence="1">
    <location>
        <position position="124"/>
    </location>
</feature>
<sequence>MPDYRSKTSTQGRNMAGARALWRATGMKDEDFKKPIIAIANSFTQFVPGHVHLKDLGQLVAREIERAGGVAKEFNTIAVDDGIAMGHDGMLYSLPSREIIADAVEYMVNAHCADAIVCISNCDKITPGMLMAALRLNIPVIFVSGGPMEAGKTKLASHGLDLVDAMVIAADSTASDEKVAEYERSACPTCGSCSGMFTANSMNCLTEALGLALPGNGSTLATHSDREQLFLTAGRTIVELCKRYYGENDESVLPRSIANFKAFENAMMLDIAMGGSTNTILHLLAAAQEGEVAFDLRDIDRLSRKVPQLCKVAPNIQNYHMEDVHRAGGIFSILGSLARGGLLHTDLPTVHSRSMEEAIAKWDITQTDDEAVHTFFKAGPAGIPTQTAFSQSTRWETLDDDRENGCIRSFEHAYSQEGGLAVLYGNIALDGCVVKTAGVDESIHVFEGTAKIFESQDSAVRGILADEVKAGDIVIIRYEGPKGGPGMQEMLYPTSYLKSKGLGKACALLTDGRFSGGTSGLSIGHASPEAAAGGAIGLVRDGDKVLIDIPNRSINLLVSDEELAERRVEQDKKGWKPAEVRPRKVTTALKAYALLATSADKGAVRNKAMLEGL</sequence>
<reference key="1">
    <citation type="submission" date="2007-05" db="EMBL/GenBank/DDBJ databases">
        <title>Complete sequence of Pseudomonas putida F1.</title>
        <authorList>
            <consortium name="US DOE Joint Genome Institute"/>
            <person name="Copeland A."/>
            <person name="Lucas S."/>
            <person name="Lapidus A."/>
            <person name="Barry K."/>
            <person name="Detter J.C."/>
            <person name="Glavina del Rio T."/>
            <person name="Hammon N."/>
            <person name="Israni S."/>
            <person name="Dalin E."/>
            <person name="Tice H."/>
            <person name="Pitluck S."/>
            <person name="Chain P."/>
            <person name="Malfatti S."/>
            <person name="Shin M."/>
            <person name="Vergez L."/>
            <person name="Schmutz J."/>
            <person name="Larimer F."/>
            <person name="Land M."/>
            <person name="Hauser L."/>
            <person name="Kyrpides N."/>
            <person name="Lykidis A."/>
            <person name="Parales R."/>
            <person name="Richardson P."/>
        </authorList>
    </citation>
    <scope>NUCLEOTIDE SEQUENCE [LARGE SCALE GENOMIC DNA]</scope>
    <source>
        <strain>ATCC 700007 / DSM 6899 / JCM 31910 / BCRC 17059 / LMG 24140 / F1</strain>
    </source>
</reference>
<accession>A5WAG2</accession>
<comment type="function">
    <text evidence="1">Functions in the biosynthesis of branched-chain amino acids. Catalyzes the dehydration of (2R,3R)-2,3-dihydroxy-3-methylpentanoate (2,3-dihydroxy-3-methylvalerate) into 2-oxo-3-methylpentanoate (2-oxo-3-methylvalerate) and of (2R)-2,3-dihydroxy-3-methylbutanoate (2,3-dihydroxyisovalerate) into 2-oxo-3-methylbutanoate (2-oxoisovalerate), the penultimate precursor to L-isoleucine and L-valine, respectively.</text>
</comment>
<comment type="catalytic activity">
    <reaction evidence="1">
        <text>(2R)-2,3-dihydroxy-3-methylbutanoate = 3-methyl-2-oxobutanoate + H2O</text>
        <dbReference type="Rhea" id="RHEA:24809"/>
        <dbReference type="ChEBI" id="CHEBI:11851"/>
        <dbReference type="ChEBI" id="CHEBI:15377"/>
        <dbReference type="ChEBI" id="CHEBI:49072"/>
        <dbReference type="EC" id="4.2.1.9"/>
    </reaction>
    <physiologicalReaction direction="left-to-right" evidence="1">
        <dbReference type="Rhea" id="RHEA:24810"/>
    </physiologicalReaction>
</comment>
<comment type="catalytic activity">
    <reaction evidence="1">
        <text>(2R,3R)-2,3-dihydroxy-3-methylpentanoate = (S)-3-methyl-2-oxopentanoate + H2O</text>
        <dbReference type="Rhea" id="RHEA:27694"/>
        <dbReference type="ChEBI" id="CHEBI:15377"/>
        <dbReference type="ChEBI" id="CHEBI:35146"/>
        <dbReference type="ChEBI" id="CHEBI:49258"/>
        <dbReference type="EC" id="4.2.1.9"/>
    </reaction>
    <physiologicalReaction direction="left-to-right" evidence="1">
        <dbReference type="Rhea" id="RHEA:27695"/>
    </physiologicalReaction>
</comment>
<comment type="cofactor">
    <cofactor evidence="1">
        <name>[2Fe-2S] cluster</name>
        <dbReference type="ChEBI" id="CHEBI:190135"/>
    </cofactor>
    <text evidence="1">Binds 1 [2Fe-2S] cluster per subunit. This cluster acts as a Lewis acid cofactor.</text>
</comment>
<comment type="cofactor">
    <cofactor evidence="1">
        <name>Mg(2+)</name>
        <dbReference type="ChEBI" id="CHEBI:18420"/>
    </cofactor>
</comment>
<comment type="pathway">
    <text evidence="1">Amino-acid biosynthesis; L-isoleucine biosynthesis; L-isoleucine from 2-oxobutanoate: step 3/4.</text>
</comment>
<comment type="pathway">
    <text evidence="1">Amino-acid biosynthesis; L-valine biosynthesis; L-valine from pyruvate: step 3/4.</text>
</comment>
<comment type="subunit">
    <text evidence="1">Homodimer.</text>
</comment>
<comment type="similarity">
    <text evidence="1">Belongs to the IlvD/Edd family.</text>
</comment>
<protein>
    <recommendedName>
        <fullName evidence="1">Dihydroxy-acid dehydratase</fullName>
        <shortName evidence="1">DAD</shortName>
        <ecNumber evidence="1">4.2.1.9</ecNumber>
    </recommendedName>
</protein>
<dbReference type="EC" id="4.2.1.9" evidence="1"/>
<dbReference type="EMBL" id="CP000712">
    <property type="protein sequence ID" value="ABQ81122.1"/>
    <property type="molecule type" value="Genomic_DNA"/>
</dbReference>
<dbReference type="SMR" id="A5WAG2"/>
<dbReference type="KEGG" id="ppf:Pput_5002"/>
<dbReference type="eggNOG" id="COG0129">
    <property type="taxonomic scope" value="Bacteria"/>
</dbReference>
<dbReference type="HOGENOM" id="CLU_014271_4_2_6"/>
<dbReference type="UniPathway" id="UPA00047">
    <property type="reaction ID" value="UER00057"/>
</dbReference>
<dbReference type="UniPathway" id="UPA00049">
    <property type="reaction ID" value="UER00061"/>
</dbReference>
<dbReference type="GO" id="GO:0005829">
    <property type="term" value="C:cytosol"/>
    <property type="evidence" value="ECO:0007669"/>
    <property type="project" value="TreeGrafter"/>
</dbReference>
<dbReference type="GO" id="GO:0051537">
    <property type="term" value="F:2 iron, 2 sulfur cluster binding"/>
    <property type="evidence" value="ECO:0007669"/>
    <property type="project" value="UniProtKB-UniRule"/>
</dbReference>
<dbReference type="GO" id="GO:0004160">
    <property type="term" value="F:dihydroxy-acid dehydratase activity"/>
    <property type="evidence" value="ECO:0007669"/>
    <property type="project" value="UniProtKB-UniRule"/>
</dbReference>
<dbReference type="GO" id="GO:0000287">
    <property type="term" value="F:magnesium ion binding"/>
    <property type="evidence" value="ECO:0007669"/>
    <property type="project" value="UniProtKB-UniRule"/>
</dbReference>
<dbReference type="GO" id="GO:0009097">
    <property type="term" value="P:isoleucine biosynthetic process"/>
    <property type="evidence" value="ECO:0007669"/>
    <property type="project" value="UniProtKB-UniRule"/>
</dbReference>
<dbReference type="GO" id="GO:0009099">
    <property type="term" value="P:L-valine biosynthetic process"/>
    <property type="evidence" value="ECO:0007669"/>
    <property type="project" value="UniProtKB-UniRule"/>
</dbReference>
<dbReference type="FunFam" id="3.50.30.80:FF:000001">
    <property type="entry name" value="Dihydroxy-acid dehydratase"/>
    <property type="match status" value="1"/>
</dbReference>
<dbReference type="Gene3D" id="3.50.30.80">
    <property type="entry name" value="IlvD/EDD C-terminal domain-like"/>
    <property type="match status" value="1"/>
</dbReference>
<dbReference type="HAMAP" id="MF_00012">
    <property type="entry name" value="IlvD"/>
    <property type="match status" value="1"/>
</dbReference>
<dbReference type="InterPro" id="IPR042096">
    <property type="entry name" value="Dihydro-acid_dehy_C"/>
</dbReference>
<dbReference type="InterPro" id="IPR004404">
    <property type="entry name" value="DihydroxyA_deHydtase"/>
</dbReference>
<dbReference type="InterPro" id="IPR020558">
    <property type="entry name" value="DiOHA_6PGluconate_deHydtase_CS"/>
</dbReference>
<dbReference type="InterPro" id="IPR056740">
    <property type="entry name" value="ILV_EDD_C"/>
</dbReference>
<dbReference type="InterPro" id="IPR000581">
    <property type="entry name" value="ILV_EDD_N"/>
</dbReference>
<dbReference type="InterPro" id="IPR037237">
    <property type="entry name" value="IlvD/EDD_N"/>
</dbReference>
<dbReference type="NCBIfam" id="TIGR00110">
    <property type="entry name" value="ilvD"/>
    <property type="match status" value="1"/>
</dbReference>
<dbReference type="NCBIfam" id="NF009103">
    <property type="entry name" value="PRK12448.1"/>
    <property type="match status" value="1"/>
</dbReference>
<dbReference type="PANTHER" id="PTHR43661">
    <property type="entry name" value="D-XYLONATE DEHYDRATASE"/>
    <property type="match status" value="1"/>
</dbReference>
<dbReference type="PANTHER" id="PTHR43661:SF3">
    <property type="entry name" value="D-XYLONATE DEHYDRATASE YAGF-RELATED"/>
    <property type="match status" value="1"/>
</dbReference>
<dbReference type="Pfam" id="PF24877">
    <property type="entry name" value="ILV_EDD_C"/>
    <property type="match status" value="1"/>
</dbReference>
<dbReference type="Pfam" id="PF00920">
    <property type="entry name" value="ILVD_EDD_N"/>
    <property type="match status" value="1"/>
</dbReference>
<dbReference type="SUPFAM" id="SSF143975">
    <property type="entry name" value="IlvD/EDD N-terminal domain-like"/>
    <property type="match status" value="1"/>
</dbReference>
<dbReference type="SUPFAM" id="SSF52016">
    <property type="entry name" value="LeuD/IlvD-like"/>
    <property type="match status" value="1"/>
</dbReference>
<dbReference type="PROSITE" id="PS00886">
    <property type="entry name" value="ILVD_EDD_1"/>
    <property type="match status" value="1"/>
</dbReference>
<dbReference type="PROSITE" id="PS00887">
    <property type="entry name" value="ILVD_EDD_2"/>
    <property type="match status" value="1"/>
</dbReference>
<proteinExistence type="inferred from homology"/>
<gene>
    <name evidence="1" type="primary">ilvD</name>
    <name type="ordered locus">Pput_5002</name>
</gene>
<name>ILVD_PSEP1</name>
<evidence type="ECO:0000255" key="1">
    <source>
        <dbReference type="HAMAP-Rule" id="MF_00012"/>
    </source>
</evidence>
<keyword id="KW-0001">2Fe-2S</keyword>
<keyword id="KW-0028">Amino-acid biosynthesis</keyword>
<keyword id="KW-0100">Branched-chain amino acid biosynthesis</keyword>
<keyword id="KW-0408">Iron</keyword>
<keyword id="KW-0411">Iron-sulfur</keyword>
<keyword id="KW-0456">Lyase</keyword>
<keyword id="KW-0460">Magnesium</keyword>
<keyword id="KW-0479">Metal-binding</keyword>
<organism>
    <name type="scientific">Pseudomonas putida (strain ATCC 700007 / DSM 6899 / JCM 31910 / BCRC 17059 / LMG 24140 / F1)</name>
    <dbReference type="NCBI Taxonomy" id="351746"/>
    <lineage>
        <taxon>Bacteria</taxon>
        <taxon>Pseudomonadati</taxon>
        <taxon>Pseudomonadota</taxon>
        <taxon>Gammaproteobacteria</taxon>
        <taxon>Pseudomonadales</taxon>
        <taxon>Pseudomonadaceae</taxon>
        <taxon>Pseudomonas</taxon>
    </lineage>
</organism>